<sequence>METSSIEINELPLATKTQTPPASVEPIPMETSSIDELPSSDSNATDNIEAVGEKRKRADEDEKTNLESSDTKITTPSPWWKTSLCSYFRREASCSHGNECKYAHGEAELRMKPDNTWDPTSERGKKAKAMKMSEHEEKEEDEVLFTEQMMESIDGDEGGGGSVSVVDLSLSKCLVHLPNKWQSDELKKFLGEQGVLYKSAKKRRGMIVGFVTFENAEQLQSGVEILDGKTVNSSNLKIADVLPRTFDKNDARKSVKSARDAVTPLAYLSYADQLEQKKTSIGQMLKKLARNARKACPNGNSLPQWVLTSRDRGGLACNLEGIIESPITNGYRNKCEFSVGLSLQGKPTVGFSLGSFCAGVTAVEEPVDCPNVSKIASQYASIFQKFIENSKFQVWNRFQHSGFWRQLTVREGRKPGVFSNDEDAITRIAEVMLMVQVCLTGSDEAEVATEFEELAKAFAEGARASSPTLPLTVLVVQNHSGISNVAPPDAPLQVLAIPISDNGTDQEQTTNVLTEARIHDHINNLRFSISPTAFFQVNTVTAEKLYSIAGDWADLGPDTLLFDVCCGTGTIGLTLAHRVGMVIGIEMNASAVADAERNATINGISNCKFICSKAEDVMSSLLKQYLDVTQMEEAKPLSNANDDLNKQIPSTEEMTNSEHVADQNLPPSNTQVEELQDNEQKDSSSLEPEKTTKPQFKNVVAIVDPPRSGLHPAVIKALRTHPRLKRLVYISCNPETLVANAIELCTPSFDEPDRGNKNYRGRKKIGIAALARHRAKSMPTSEAFRPVKAMAVDLFPHTDHCEMVMLLER</sequence>
<reference key="1">
    <citation type="journal article" date="1999" name="Nature">
        <title>Sequence and analysis of chromosome 2 of the plant Arabidopsis thaliana.</title>
        <authorList>
            <person name="Lin X."/>
            <person name="Kaul S."/>
            <person name="Rounsley S.D."/>
            <person name="Shea T.P."/>
            <person name="Benito M.-I."/>
            <person name="Town C.D."/>
            <person name="Fujii C.Y."/>
            <person name="Mason T.M."/>
            <person name="Bowman C.L."/>
            <person name="Barnstead M.E."/>
            <person name="Feldblyum T.V."/>
            <person name="Buell C.R."/>
            <person name="Ketchum K.A."/>
            <person name="Lee J.J."/>
            <person name="Ronning C.M."/>
            <person name="Koo H.L."/>
            <person name="Moffat K.S."/>
            <person name="Cronin L.A."/>
            <person name="Shen M."/>
            <person name="Pai G."/>
            <person name="Van Aken S."/>
            <person name="Umayam L."/>
            <person name="Tallon L.J."/>
            <person name="Gill J.E."/>
            <person name="Adams M.D."/>
            <person name="Carrera A.J."/>
            <person name="Creasy T.H."/>
            <person name="Goodman H.M."/>
            <person name="Somerville C.R."/>
            <person name="Copenhaver G.P."/>
            <person name="Preuss D."/>
            <person name="Nierman W.C."/>
            <person name="White O."/>
            <person name="Eisen J.A."/>
            <person name="Salzberg S.L."/>
            <person name="Fraser C.M."/>
            <person name="Venter J.C."/>
        </authorList>
    </citation>
    <scope>NUCLEOTIDE SEQUENCE [LARGE SCALE GENOMIC DNA]</scope>
    <source>
        <strain>cv. Columbia</strain>
    </source>
</reference>
<reference key="2">
    <citation type="journal article" date="2017" name="Plant J.">
        <title>Araport11: a complete reannotation of the Arabidopsis thaliana reference genome.</title>
        <authorList>
            <person name="Cheng C.Y."/>
            <person name="Krishnakumar V."/>
            <person name="Chan A.P."/>
            <person name="Thibaud-Nissen F."/>
            <person name="Schobel S."/>
            <person name="Town C.D."/>
        </authorList>
    </citation>
    <scope>GENOME REANNOTATION</scope>
    <source>
        <strain>cv. Columbia</strain>
    </source>
</reference>
<reference key="3">
    <citation type="journal article" date="2003" name="Science">
        <title>Empirical analysis of transcriptional activity in the Arabidopsis genome.</title>
        <authorList>
            <person name="Yamada K."/>
            <person name="Lim J."/>
            <person name="Dale J.M."/>
            <person name="Chen H."/>
            <person name="Shinn P."/>
            <person name="Palm C.J."/>
            <person name="Southwick A.M."/>
            <person name="Wu H.C."/>
            <person name="Kim C.J."/>
            <person name="Nguyen M."/>
            <person name="Pham P.K."/>
            <person name="Cheuk R.F."/>
            <person name="Karlin-Newmann G."/>
            <person name="Liu S.X."/>
            <person name="Lam B."/>
            <person name="Sakano H."/>
            <person name="Wu T."/>
            <person name="Yu G."/>
            <person name="Miranda M."/>
            <person name="Quach H.L."/>
            <person name="Tripp M."/>
            <person name="Chang C.H."/>
            <person name="Lee J.M."/>
            <person name="Toriumi M.J."/>
            <person name="Chan M.M."/>
            <person name="Tang C.C."/>
            <person name="Onodera C.S."/>
            <person name="Deng J.M."/>
            <person name="Akiyama K."/>
            <person name="Ansari Y."/>
            <person name="Arakawa T."/>
            <person name="Banh J."/>
            <person name="Banno F."/>
            <person name="Bowser L."/>
            <person name="Brooks S.Y."/>
            <person name="Carninci P."/>
            <person name="Chao Q."/>
            <person name="Choy N."/>
            <person name="Enju A."/>
            <person name="Goldsmith A.D."/>
            <person name="Gurjal M."/>
            <person name="Hansen N.F."/>
            <person name="Hayashizaki Y."/>
            <person name="Johnson-Hopson C."/>
            <person name="Hsuan V.W."/>
            <person name="Iida K."/>
            <person name="Karnes M."/>
            <person name="Khan S."/>
            <person name="Koesema E."/>
            <person name="Ishida J."/>
            <person name="Jiang P.X."/>
            <person name="Jones T."/>
            <person name="Kawai J."/>
            <person name="Kamiya A."/>
            <person name="Meyers C."/>
            <person name="Nakajima M."/>
            <person name="Narusaka M."/>
            <person name="Seki M."/>
            <person name="Sakurai T."/>
            <person name="Satou M."/>
            <person name="Tamse R."/>
            <person name="Vaysberg M."/>
            <person name="Wallender E.K."/>
            <person name="Wong C."/>
            <person name="Yamamura Y."/>
            <person name="Yuan S."/>
            <person name="Shinozaki K."/>
            <person name="Davis R.W."/>
            <person name="Theologis A."/>
            <person name="Ecker J.R."/>
        </authorList>
    </citation>
    <scope>NUCLEOTIDE SEQUENCE [LARGE SCALE MRNA]</scope>
    <source>
        <strain>cv. Columbia</strain>
    </source>
</reference>
<reference key="4">
    <citation type="journal article" date="2008" name="BMC Genomics">
        <title>Genome-wide analysis of CCCH zinc finger family in Arabidopsis and rice.</title>
        <authorList>
            <person name="Wang D."/>
            <person name="Guo Y."/>
            <person name="Wu C."/>
            <person name="Yang G."/>
            <person name="Li Y."/>
            <person name="Zheng C."/>
        </authorList>
    </citation>
    <scope>NOMENCLATURE</scope>
</reference>
<reference key="5">
    <citation type="journal article" date="2012" name="Mol. Cell. Proteomics">
        <title>Comparative large-scale characterisation of plant vs. mammal proteins reveals similar and idiosyncratic N-alpha acetylation features.</title>
        <authorList>
            <person name="Bienvenut W.V."/>
            <person name="Sumpton D."/>
            <person name="Martinez A."/>
            <person name="Lilla S."/>
            <person name="Espagne C."/>
            <person name="Meinnel T."/>
            <person name="Giglione C."/>
        </authorList>
    </citation>
    <scope>ACETYLATION [LARGE SCALE ANALYSIS] AT MET-1</scope>
    <scope>IDENTIFICATION BY MASS SPECTROMETRY [LARGE SCALE ANALYSIS]</scope>
</reference>
<proteinExistence type="evidence at protein level"/>
<gene>
    <name type="ordered locus">At2g28450</name>
    <name type="ORF">T1B3.3</name>
</gene>
<keyword id="KW-0007">Acetylation</keyword>
<keyword id="KW-0025">Alternative splicing</keyword>
<keyword id="KW-0238">DNA-binding</keyword>
<keyword id="KW-0479">Metal-binding</keyword>
<keyword id="KW-0489">Methyltransferase</keyword>
<keyword id="KW-1185">Reference proteome</keyword>
<keyword id="KW-0949">S-adenosyl-L-methionine</keyword>
<keyword id="KW-0808">Transferase</keyword>
<keyword id="KW-0862">Zinc</keyword>
<keyword id="KW-0863">Zinc-finger</keyword>
<name>C3H24_ARATH</name>
<accession>Q8L7S3</accession>
<accession>Q9SKM5</accession>
<dbReference type="EC" id="2.1.1.-"/>
<dbReference type="EMBL" id="AC006283">
    <property type="protein sequence ID" value="AAD20681.1"/>
    <property type="status" value="ALT_SEQ"/>
    <property type="molecule type" value="Genomic_DNA"/>
</dbReference>
<dbReference type="EMBL" id="CP002685">
    <property type="protein sequence ID" value="AEC08124.1"/>
    <property type="molecule type" value="Genomic_DNA"/>
</dbReference>
<dbReference type="EMBL" id="AY128289">
    <property type="protein sequence ID" value="AAM91097.1"/>
    <property type="molecule type" value="mRNA"/>
</dbReference>
<dbReference type="EMBL" id="BT002293">
    <property type="protein sequence ID" value="AAN72304.1"/>
    <property type="molecule type" value="mRNA"/>
</dbReference>
<dbReference type="PIR" id="A84685">
    <property type="entry name" value="A84685"/>
</dbReference>
<dbReference type="RefSeq" id="NP_180412.2">
    <molecule id="Q8L7S3-1"/>
    <property type="nucleotide sequence ID" value="NM_128405.3"/>
</dbReference>
<dbReference type="SMR" id="Q8L7S3"/>
<dbReference type="BioGRID" id="2743">
    <property type="interactions" value="3"/>
</dbReference>
<dbReference type="FunCoup" id="Q8L7S3">
    <property type="interactions" value="3957"/>
</dbReference>
<dbReference type="IntAct" id="Q8L7S3">
    <property type="interactions" value="3"/>
</dbReference>
<dbReference type="STRING" id="3702.Q8L7S3"/>
<dbReference type="iPTMnet" id="Q8L7S3"/>
<dbReference type="PaxDb" id="3702-AT2G28450.1"/>
<dbReference type="ProteomicsDB" id="240383">
    <molecule id="Q8L7S3-1"/>
</dbReference>
<dbReference type="EnsemblPlants" id="AT2G28450.1">
    <molecule id="Q8L7S3-1"/>
    <property type="protein sequence ID" value="AT2G28450.1"/>
    <property type="gene ID" value="AT2G28450"/>
</dbReference>
<dbReference type="GeneID" id="817393"/>
<dbReference type="Gramene" id="AT2G28450.1">
    <molecule id="Q8L7S3-1"/>
    <property type="protein sequence ID" value="AT2G28450.1"/>
    <property type="gene ID" value="AT2G28450"/>
</dbReference>
<dbReference type="KEGG" id="ath:AT2G28450"/>
<dbReference type="Araport" id="AT2G28450"/>
<dbReference type="TAIR" id="AT2G28450">
    <property type="gene designation" value="TRM2B"/>
</dbReference>
<dbReference type="eggNOG" id="KOG1677">
    <property type="taxonomic scope" value="Eukaryota"/>
</dbReference>
<dbReference type="eggNOG" id="KOG2187">
    <property type="taxonomic scope" value="Eukaryota"/>
</dbReference>
<dbReference type="HOGENOM" id="CLU_014689_4_1_1"/>
<dbReference type="InParanoid" id="Q8L7S3"/>
<dbReference type="OMA" id="NRGWRTM"/>
<dbReference type="PhylomeDB" id="Q8L7S3"/>
<dbReference type="PRO" id="PR:Q8L7S3"/>
<dbReference type="Proteomes" id="UP000006548">
    <property type="component" value="Chromosome 2"/>
</dbReference>
<dbReference type="ExpressionAtlas" id="Q8L7S3">
    <property type="expression patterns" value="baseline and differential"/>
</dbReference>
<dbReference type="GO" id="GO:0008173">
    <property type="term" value="F:RNA methyltransferase activity"/>
    <property type="evidence" value="ECO:0007669"/>
    <property type="project" value="InterPro"/>
</dbReference>
<dbReference type="GO" id="GO:0000976">
    <property type="term" value="F:transcription cis-regulatory region binding"/>
    <property type="evidence" value="ECO:0000353"/>
    <property type="project" value="TAIR"/>
</dbReference>
<dbReference type="GO" id="GO:0008270">
    <property type="term" value="F:zinc ion binding"/>
    <property type="evidence" value="ECO:0007669"/>
    <property type="project" value="UniProtKB-KW"/>
</dbReference>
<dbReference type="GO" id="GO:0032259">
    <property type="term" value="P:methylation"/>
    <property type="evidence" value="ECO:0007669"/>
    <property type="project" value="UniProtKB-KW"/>
</dbReference>
<dbReference type="GO" id="GO:0006396">
    <property type="term" value="P:RNA processing"/>
    <property type="evidence" value="ECO:0007669"/>
    <property type="project" value="InterPro"/>
</dbReference>
<dbReference type="CDD" id="cd02440">
    <property type="entry name" value="AdoMet_MTases"/>
    <property type="match status" value="1"/>
</dbReference>
<dbReference type="CDD" id="cd21612">
    <property type="entry name" value="RRM_AtRDRP1_like"/>
    <property type="match status" value="1"/>
</dbReference>
<dbReference type="Gene3D" id="3.30.70.330">
    <property type="match status" value="1"/>
</dbReference>
<dbReference type="Gene3D" id="3.40.50.150">
    <property type="entry name" value="Vaccinia Virus protein VP39"/>
    <property type="match status" value="1"/>
</dbReference>
<dbReference type="Gene3D" id="4.10.1000.10">
    <property type="entry name" value="Zinc finger, CCCH-type"/>
    <property type="match status" value="1"/>
</dbReference>
<dbReference type="InterPro" id="IPR025714">
    <property type="entry name" value="Methyltranfer_dom"/>
</dbReference>
<dbReference type="InterPro" id="IPR030390">
    <property type="entry name" value="MeTrfase_TrmA_AS"/>
</dbReference>
<dbReference type="InterPro" id="IPR012677">
    <property type="entry name" value="Nucleotide-bd_a/b_plait_sf"/>
</dbReference>
<dbReference type="InterPro" id="IPR035979">
    <property type="entry name" value="RBD_domain_sf"/>
</dbReference>
<dbReference type="InterPro" id="IPR029063">
    <property type="entry name" value="SAM-dependent_MTases_sf"/>
</dbReference>
<dbReference type="InterPro" id="IPR045850">
    <property type="entry name" value="TRM2_met"/>
</dbReference>
<dbReference type="InterPro" id="IPR010280">
    <property type="entry name" value="U5_MeTrfase_fam"/>
</dbReference>
<dbReference type="InterPro" id="IPR000571">
    <property type="entry name" value="Znf_CCCH"/>
</dbReference>
<dbReference type="InterPro" id="IPR036855">
    <property type="entry name" value="Znf_CCCH_sf"/>
</dbReference>
<dbReference type="PANTHER" id="PTHR45904">
    <property type="entry name" value="TRNA (URACIL-5-)-METHYLTRANSFERASE"/>
    <property type="match status" value="1"/>
</dbReference>
<dbReference type="PANTHER" id="PTHR45904:SF2">
    <property type="entry name" value="TRNA (URACIL-5-)-METHYLTRANSFERASE HOMOLOG A"/>
    <property type="match status" value="1"/>
</dbReference>
<dbReference type="Pfam" id="PF13847">
    <property type="entry name" value="Methyltransf_31"/>
    <property type="match status" value="1"/>
</dbReference>
<dbReference type="Pfam" id="PF05958">
    <property type="entry name" value="tRNA_U5-meth_tr"/>
    <property type="match status" value="1"/>
</dbReference>
<dbReference type="Pfam" id="PF00642">
    <property type="entry name" value="zf-CCCH"/>
    <property type="match status" value="1"/>
</dbReference>
<dbReference type="SMART" id="SM00356">
    <property type="entry name" value="ZnF_C3H1"/>
    <property type="match status" value="1"/>
</dbReference>
<dbReference type="SUPFAM" id="SSF90229">
    <property type="entry name" value="CCCH zinc finger"/>
    <property type="match status" value="1"/>
</dbReference>
<dbReference type="SUPFAM" id="SSF54928">
    <property type="entry name" value="RNA-binding domain, RBD"/>
    <property type="match status" value="1"/>
</dbReference>
<dbReference type="SUPFAM" id="SSF53335">
    <property type="entry name" value="S-adenosyl-L-methionine-dependent methyltransferases"/>
    <property type="match status" value="1"/>
</dbReference>
<dbReference type="PROSITE" id="PS51687">
    <property type="entry name" value="SAM_MT_RNA_M5U"/>
    <property type="match status" value="1"/>
</dbReference>
<dbReference type="PROSITE" id="PS50103">
    <property type="entry name" value="ZF_C3H1"/>
    <property type="match status" value="1"/>
</dbReference>
<protein>
    <recommendedName>
        <fullName>Zinc finger CCCH domain-containing protein 24</fullName>
        <shortName>AtC3H24</shortName>
        <ecNumber>2.1.1.-</ecNumber>
    </recommendedName>
</protein>
<organism>
    <name type="scientific">Arabidopsis thaliana</name>
    <name type="common">Mouse-ear cress</name>
    <dbReference type="NCBI Taxonomy" id="3702"/>
    <lineage>
        <taxon>Eukaryota</taxon>
        <taxon>Viridiplantae</taxon>
        <taxon>Streptophyta</taxon>
        <taxon>Embryophyta</taxon>
        <taxon>Tracheophyta</taxon>
        <taxon>Spermatophyta</taxon>
        <taxon>Magnoliopsida</taxon>
        <taxon>eudicotyledons</taxon>
        <taxon>Gunneridae</taxon>
        <taxon>Pentapetalae</taxon>
        <taxon>rosids</taxon>
        <taxon>malvids</taxon>
        <taxon>Brassicales</taxon>
        <taxon>Brassicaceae</taxon>
        <taxon>Camelineae</taxon>
        <taxon>Arabidopsis</taxon>
    </lineage>
</organism>
<evidence type="ECO:0000255" key="1">
    <source>
        <dbReference type="PROSITE-ProRule" id="PRU00723"/>
    </source>
</evidence>
<evidence type="ECO:0000255" key="2">
    <source>
        <dbReference type="PROSITE-ProRule" id="PRU01024"/>
    </source>
</evidence>
<evidence type="ECO:0000256" key="3">
    <source>
        <dbReference type="SAM" id="MobiDB-lite"/>
    </source>
</evidence>
<evidence type="ECO:0000305" key="4"/>
<evidence type="ECO:0007744" key="5">
    <source>
    </source>
</evidence>
<feature type="chain" id="PRO_0000371983" description="Zinc finger CCCH domain-containing protein 24">
    <location>
        <begin position="1"/>
        <end position="809"/>
    </location>
</feature>
<feature type="zinc finger region" description="C3H1-type" evidence="1">
    <location>
        <begin position="79"/>
        <end position="107"/>
    </location>
</feature>
<feature type="region of interest" description="Disordered" evidence="3">
    <location>
        <begin position="1"/>
        <end position="74"/>
    </location>
</feature>
<feature type="region of interest" description="Disordered" evidence="3">
    <location>
        <begin position="652"/>
        <end position="693"/>
    </location>
</feature>
<feature type="compositionally biased region" description="Polar residues" evidence="3">
    <location>
        <begin position="30"/>
        <end position="46"/>
    </location>
</feature>
<feature type="compositionally biased region" description="Basic and acidic residues" evidence="3">
    <location>
        <begin position="51"/>
        <end position="65"/>
    </location>
</feature>
<feature type="compositionally biased region" description="Basic and acidic residues" evidence="3">
    <location>
        <begin position="678"/>
        <end position="692"/>
    </location>
</feature>
<feature type="active site" description="Nucleophile" evidence="2">
    <location>
        <position position="732"/>
    </location>
</feature>
<feature type="binding site" evidence="2">
    <location>
        <position position="536"/>
    </location>
    <ligand>
        <name>S-adenosyl-L-methionine</name>
        <dbReference type="ChEBI" id="CHEBI:59789"/>
    </ligand>
</feature>
<feature type="binding site" evidence="2">
    <location>
        <position position="586"/>
    </location>
    <ligand>
        <name>S-adenosyl-L-methionine</name>
        <dbReference type="ChEBI" id="CHEBI:59789"/>
    </ligand>
</feature>
<feature type="binding site" evidence="2">
    <location>
        <position position="704"/>
    </location>
    <ligand>
        <name>S-adenosyl-L-methionine</name>
        <dbReference type="ChEBI" id="CHEBI:59789"/>
    </ligand>
</feature>
<feature type="modified residue" description="N-acetylmethionine" evidence="5">
    <location>
        <position position="1"/>
    </location>
</feature>
<comment type="alternative products">
    <event type="alternative splicing"/>
    <isoform>
        <id>Q8L7S3-1</id>
        <name>1</name>
        <sequence type="displayed"/>
    </isoform>
    <text>A number of isoforms are produced. According to EST sequences.</text>
</comment>
<comment type="similarity">
    <text evidence="2">Belongs to the class I-like SAM-binding methyltransferase superfamily. RNA M5U methyltransferase family.</text>
</comment>
<comment type="sequence caution" evidence="4">
    <conflict type="erroneous gene model prediction">
        <sequence resource="EMBL-CDS" id="AAD20681"/>
    </conflict>
</comment>